<comment type="function">
    <text evidence="1">Catalyzes the NADPH-dependent reduction of 7-cyano-7-deazaguanine (preQ0) to 7-aminomethyl-7-deazaguanine (preQ1).</text>
</comment>
<comment type="catalytic activity">
    <reaction evidence="1">
        <text>7-aminomethyl-7-carbaguanine + 2 NADP(+) = 7-cyano-7-deazaguanine + 2 NADPH + 3 H(+)</text>
        <dbReference type="Rhea" id="RHEA:13409"/>
        <dbReference type="ChEBI" id="CHEBI:15378"/>
        <dbReference type="ChEBI" id="CHEBI:45075"/>
        <dbReference type="ChEBI" id="CHEBI:57783"/>
        <dbReference type="ChEBI" id="CHEBI:58349"/>
        <dbReference type="ChEBI" id="CHEBI:58703"/>
        <dbReference type="EC" id="1.7.1.13"/>
    </reaction>
</comment>
<comment type="pathway">
    <text evidence="1">tRNA modification; tRNA-queuosine biosynthesis.</text>
</comment>
<comment type="subcellular location">
    <subcellularLocation>
        <location evidence="1">Cytoplasm</location>
    </subcellularLocation>
</comment>
<comment type="similarity">
    <text evidence="1">Belongs to the GTP cyclohydrolase I family. QueF type 1 subfamily.</text>
</comment>
<name>QUEF_ACAM1</name>
<keyword id="KW-0963">Cytoplasm</keyword>
<keyword id="KW-0521">NADP</keyword>
<keyword id="KW-0560">Oxidoreductase</keyword>
<keyword id="KW-0671">Queuosine biosynthesis</keyword>
<keyword id="KW-1185">Reference proteome</keyword>
<reference key="1">
    <citation type="journal article" date="2008" name="Proc. Natl. Acad. Sci. U.S.A.">
        <title>Niche adaptation and genome expansion in the chlorophyll d-producing cyanobacterium Acaryochloris marina.</title>
        <authorList>
            <person name="Swingley W.D."/>
            <person name="Chen M."/>
            <person name="Cheung P.C."/>
            <person name="Conrad A.L."/>
            <person name="Dejesa L.C."/>
            <person name="Hao J."/>
            <person name="Honchak B.M."/>
            <person name="Karbach L.E."/>
            <person name="Kurdoglu A."/>
            <person name="Lahiri S."/>
            <person name="Mastrian S.D."/>
            <person name="Miyashita H."/>
            <person name="Page L."/>
            <person name="Ramakrishna P."/>
            <person name="Satoh S."/>
            <person name="Sattley W.M."/>
            <person name="Shimada Y."/>
            <person name="Taylor H.L."/>
            <person name="Tomo T."/>
            <person name="Tsuchiya T."/>
            <person name="Wang Z.T."/>
            <person name="Raymond J."/>
            <person name="Mimuro M."/>
            <person name="Blankenship R.E."/>
            <person name="Touchman J.W."/>
        </authorList>
    </citation>
    <scope>NUCLEOTIDE SEQUENCE [LARGE SCALE GENOMIC DNA]</scope>
    <source>
        <strain>MBIC 11017</strain>
    </source>
</reference>
<proteinExistence type="inferred from homology"/>
<accession>B0CDX9</accession>
<evidence type="ECO:0000255" key="1">
    <source>
        <dbReference type="HAMAP-Rule" id="MF_00818"/>
    </source>
</evidence>
<evidence type="ECO:0000256" key="2">
    <source>
        <dbReference type="SAM" id="MobiDB-lite"/>
    </source>
</evidence>
<organism>
    <name type="scientific">Acaryochloris marina (strain MBIC 11017)</name>
    <dbReference type="NCBI Taxonomy" id="329726"/>
    <lineage>
        <taxon>Bacteria</taxon>
        <taxon>Bacillati</taxon>
        <taxon>Cyanobacteriota</taxon>
        <taxon>Cyanophyceae</taxon>
        <taxon>Acaryochloridales</taxon>
        <taxon>Acaryochloridaceae</taxon>
        <taxon>Acaryochloris</taxon>
    </lineage>
</organism>
<dbReference type="EC" id="1.7.1.13" evidence="1"/>
<dbReference type="EMBL" id="CP000828">
    <property type="protein sequence ID" value="ABW29331.1"/>
    <property type="molecule type" value="Genomic_DNA"/>
</dbReference>
<dbReference type="RefSeq" id="WP_012164657.1">
    <property type="nucleotide sequence ID" value="NC_009925.1"/>
</dbReference>
<dbReference type="SMR" id="B0CDX9"/>
<dbReference type="STRING" id="329726.AM1_4352"/>
<dbReference type="KEGG" id="amr:AM1_4352"/>
<dbReference type="eggNOG" id="COG0780">
    <property type="taxonomic scope" value="Bacteria"/>
</dbReference>
<dbReference type="HOGENOM" id="CLU_102489_1_1_3"/>
<dbReference type="OrthoDB" id="9795077at2"/>
<dbReference type="UniPathway" id="UPA00392"/>
<dbReference type="Proteomes" id="UP000000268">
    <property type="component" value="Chromosome"/>
</dbReference>
<dbReference type="GO" id="GO:0005737">
    <property type="term" value="C:cytoplasm"/>
    <property type="evidence" value="ECO:0007669"/>
    <property type="project" value="UniProtKB-SubCell"/>
</dbReference>
<dbReference type="GO" id="GO:0033739">
    <property type="term" value="F:preQ1 synthase activity"/>
    <property type="evidence" value="ECO:0007669"/>
    <property type="project" value="UniProtKB-UniRule"/>
</dbReference>
<dbReference type="GO" id="GO:0008616">
    <property type="term" value="P:queuosine biosynthetic process"/>
    <property type="evidence" value="ECO:0007669"/>
    <property type="project" value="UniProtKB-UniRule"/>
</dbReference>
<dbReference type="GO" id="GO:0006400">
    <property type="term" value="P:tRNA modification"/>
    <property type="evidence" value="ECO:0007669"/>
    <property type="project" value="UniProtKB-UniRule"/>
</dbReference>
<dbReference type="Gene3D" id="3.30.1130.10">
    <property type="match status" value="1"/>
</dbReference>
<dbReference type="HAMAP" id="MF_00818">
    <property type="entry name" value="QueF_type1"/>
    <property type="match status" value="1"/>
</dbReference>
<dbReference type="InterPro" id="IPR043133">
    <property type="entry name" value="GTP-CH-I_C/QueF"/>
</dbReference>
<dbReference type="InterPro" id="IPR050084">
    <property type="entry name" value="NADPH_dep_7-cyano-7-deazaG_red"/>
</dbReference>
<dbReference type="InterPro" id="IPR029500">
    <property type="entry name" value="QueF"/>
</dbReference>
<dbReference type="InterPro" id="IPR016856">
    <property type="entry name" value="QueF_type1"/>
</dbReference>
<dbReference type="NCBIfam" id="TIGR03139">
    <property type="entry name" value="QueF-II"/>
    <property type="match status" value="1"/>
</dbReference>
<dbReference type="PANTHER" id="PTHR34354">
    <property type="entry name" value="NADPH-DEPENDENT 7-CYANO-7-DEAZAGUANINE REDUCTASE"/>
    <property type="match status" value="1"/>
</dbReference>
<dbReference type="PANTHER" id="PTHR34354:SF1">
    <property type="entry name" value="NADPH-DEPENDENT 7-CYANO-7-DEAZAGUANINE REDUCTASE"/>
    <property type="match status" value="1"/>
</dbReference>
<dbReference type="Pfam" id="PF14489">
    <property type="entry name" value="QueF"/>
    <property type="match status" value="1"/>
</dbReference>
<dbReference type="PIRSF" id="PIRSF027377">
    <property type="entry name" value="Nitrile_oxidored_QueF"/>
    <property type="match status" value="1"/>
</dbReference>
<dbReference type="SUPFAM" id="SSF55620">
    <property type="entry name" value="Tetrahydrobiopterin biosynthesis enzymes-like"/>
    <property type="match status" value="1"/>
</dbReference>
<gene>
    <name evidence="1" type="primary">queF</name>
    <name type="ordered locus">AM1_4352</name>
</gene>
<protein>
    <recommendedName>
        <fullName evidence="1">NADPH-dependent 7-cyano-7-deazaguanine reductase</fullName>
        <ecNumber evidence="1">1.7.1.13</ecNumber>
    </recommendedName>
    <alternativeName>
        <fullName evidence="1">7-cyano-7-carbaguanine reductase</fullName>
    </alternativeName>
    <alternativeName>
        <fullName evidence="1">NADPH-dependent nitrile oxidoreductase</fullName>
    </alternativeName>
    <alternativeName>
        <fullName evidence="1">PreQ(0) reductase</fullName>
    </alternativeName>
</protein>
<sequence length="144" mass="16400">MSQSPIQNPTSDPNAQSVQETSESKYGERQIAEGTLITFPNPRVGRRYDIHITLPEFTCKCPFSGYPDFATIHLTYVPDQRVVELKALKLYINSYRDRYISHEESVNQILDDIVAACDPLEITVKGDFLPRGNVHTVIEVHHQK</sequence>
<feature type="chain" id="PRO_1000083832" description="NADPH-dependent 7-cyano-7-deazaguanine reductase">
    <location>
        <begin position="1"/>
        <end position="144"/>
    </location>
</feature>
<feature type="region of interest" description="Disordered" evidence="2">
    <location>
        <begin position="1"/>
        <end position="27"/>
    </location>
</feature>
<feature type="compositionally biased region" description="Polar residues" evidence="2">
    <location>
        <begin position="1"/>
        <end position="21"/>
    </location>
</feature>
<feature type="active site" description="Thioimide intermediate" evidence="1">
    <location>
        <position position="61"/>
    </location>
</feature>
<feature type="active site" description="Proton donor" evidence="1">
    <location>
        <position position="68"/>
    </location>
</feature>
<feature type="binding site" evidence="1">
    <location>
        <begin position="83"/>
        <end position="85"/>
    </location>
    <ligand>
        <name>substrate</name>
    </ligand>
</feature>
<feature type="binding site" evidence="1">
    <location>
        <begin position="102"/>
        <end position="103"/>
    </location>
    <ligand>
        <name>substrate</name>
    </ligand>
</feature>